<organism>
    <name type="scientific">Shewanella baltica (strain OS155 / ATCC BAA-1091)</name>
    <dbReference type="NCBI Taxonomy" id="325240"/>
    <lineage>
        <taxon>Bacteria</taxon>
        <taxon>Pseudomonadati</taxon>
        <taxon>Pseudomonadota</taxon>
        <taxon>Gammaproteobacteria</taxon>
        <taxon>Alteromonadales</taxon>
        <taxon>Shewanellaceae</taxon>
        <taxon>Shewanella</taxon>
    </lineage>
</organism>
<proteinExistence type="inferred from homology"/>
<comment type="catalytic activity">
    <reaction evidence="1">
        <text>1-(5-phospho-beta-D-ribosyl)-5-[(5-phospho-beta-D-ribosylamino)methylideneamino]imidazole-4-carboxamide = 5-[(5-phospho-1-deoxy-D-ribulos-1-ylimino)methylamino]-1-(5-phospho-beta-D-ribosyl)imidazole-4-carboxamide</text>
        <dbReference type="Rhea" id="RHEA:15469"/>
        <dbReference type="ChEBI" id="CHEBI:58435"/>
        <dbReference type="ChEBI" id="CHEBI:58525"/>
        <dbReference type="EC" id="5.3.1.16"/>
    </reaction>
</comment>
<comment type="pathway">
    <text evidence="1">Amino-acid biosynthesis; L-histidine biosynthesis; L-histidine from 5-phospho-alpha-D-ribose 1-diphosphate: step 4/9.</text>
</comment>
<comment type="subcellular location">
    <subcellularLocation>
        <location evidence="1">Cytoplasm</location>
    </subcellularLocation>
</comment>
<comment type="similarity">
    <text evidence="1">Belongs to the HisA/HisF family.</text>
</comment>
<dbReference type="EC" id="5.3.1.16" evidence="1"/>
<dbReference type="EMBL" id="CP000563">
    <property type="protein sequence ID" value="ABN61923.1"/>
    <property type="molecule type" value="Genomic_DNA"/>
</dbReference>
<dbReference type="RefSeq" id="WP_011846972.1">
    <property type="nucleotide sequence ID" value="NC_009052.1"/>
</dbReference>
<dbReference type="SMR" id="A3D5B0"/>
<dbReference type="STRING" id="325240.Sbal_2430"/>
<dbReference type="KEGG" id="sbl:Sbal_2430"/>
<dbReference type="HOGENOM" id="CLU_048577_1_2_6"/>
<dbReference type="OrthoDB" id="9807749at2"/>
<dbReference type="UniPathway" id="UPA00031">
    <property type="reaction ID" value="UER00009"/>
</dbReference>
<dbReference type="Proteomes" id="UP000001557">
    <property type="component" value="Chromosome"/>
</dbReference>
<dbReference type="GO" id="GO:0005737">
    <property type="term" value="C:cytoplasm"/>
    <property type="evidence" value="ECO:0007669"/>
    <property type="project" value="UniProtKB-SubCell"/>
</dbReference>
<dbReference type="GO" id="GO:0003949">
    <property type="term" value="F:1-(5-phosphoribosyl)-5-[(5-phosphoribosylamino)methylideneamino]imidazole-4-carboxamide isomerase activity"/>
    <property type="evidence" value="ECO:0007669"/>
    <property type="project" value="UniProtKB-UniRule"/>
</dbReference>
<dbReference type="GO" id="GO:0000105">
    <property type="term" value="P:L-histidine biosynthetic process"/>
    <property type="evidence" value="ECO:0007669"/>
    <property type="project" value="UniProtKB-UniRule"/>
</dbReference>
<dbReference type="GO" id="GO:0000162">
    <property type="term" value="P:L-tryptophan biosynthetic process"/>
    <property type="evidence" value="ECO:0007669"/>
    <property type="project" value="TreeGrafter"/>
</dbReference>
<dbReference type="CDD" id="cd04732">
    <property type="entry name" value="HisA"/>
    <property type="match status" value="1"/>
</dbReference>
<dbReference type="FunFam" id="3.20.20.70:FF:000009">
    <property type="entry name" value="1-(5-phosphoribosyl)-5-[(5-phosphoribosylamino)methylideneamino] imidazole-4-carboxamide isomerase"/>
    <property type="match status" value="1"/>
</dbReference>
<dbReference type="Gene3D" id="3.20.20.70">
    <property type="entry name" value="Aldolase class I"/>
    <property type="match status" value="1"/>
</dbReference>
<dbReference type="HAMAP" id="MF_01014">
    <property type="entry name" value="HisA"/>
    <property type="match status" value="1"/>
</dbReference>
<dbReference type="InterPro" id="IPR013785">
    <property type="entry name" value="Aldolase_TIM"/>
</dbReference>
<dbReference type="InterPro" id="IPR006062">
    <property type="entry name" value="His_biosynth"/>
</dbReference>
<dbReference type="InterPro" id="IPR006063">
    <property type="entry name" value="HisA_bact_arch"/>
</dbReference>
<dbReference type="InterPro" id="IPR044524">
    <property type="entry name" value="Isoase_HisA-like"/>
</dbReference>
<dbReference type="InterPro" id="IPR023016">
    <property type="entry name" value="Isoase_HisA-like_bact"/>
</dbReference>
<dbReference type="InterPro" id="IPR011060">
    <property type="entry name" value="RibuloseP-bd_barrel"/>
</dbReference>
<dbReference type="NCBIfam" id="TIGR00007">
    <property type="entry name" value="1-(5-phosphoribosyl)-5-[(5-phosphoribosylamino)methylideneamino]imidazole-4-carboxamide isomerase"/>
    <property type="match status" value="1"/>
</dbReference>
<dbReference type="PANTHER" id="PTHR43090">
    <property type="entry name" value="1-(5-PHOSPHORIBOSYL)-5-[(5-PHOSPHORIBOSYLAMINO)METHYLIDENEAMINO] IMIDAZOLE-4-CARBOXAMIDE ISOMERASE"/>
    <property type="match status" value="1"/>
</dbReference>
<dbReference type="PANTHER" id="PTHR43090:SF2">
    <property type="entry name" value="1-(5-PHOSPHORIBOSYL)-5-[(5-PHOSPHORIBOSYLAMINO)METHYLIDENEAMINO] IMIDAZOLE-4-CARBOXAMIDE ISOMERASE"/>
    <property type="match status" value="1"/>
</dbReference>
<dbReference type="Pfam" id="PF00977">
    <property type="entry name" value="His_biosynth"/>
    <property type="match status" value="1"/>
</dbReference>
<dbReference type="SUPFAM" id="SSF51366">
    <property type="entry name" value="Ribulose-phoshate binding barrel"/>
    <property type="match status" value="1"/>
</dbReference>
<evidence type="ECO:0000255" key="1">
    <source>
        <dbReference type="HAMAP-Rule" id="MF_01014"/>
    </source>
</evidence>
<protein>
    <recommendedName>
        <fullName evidence="1">1-(5-phosphoribosyl)-5-[(5-phosphoribosylamino)methylideneamino] imidazole-4-carboxamide isomerase</fullName>
        <ecNumber evidence="1">5.3.1.16</ecNumber>
    </recommendedName>
    <alternativeName>
        <fullName evidence="1">Phosphoribosylformimino-5-aminoimidazole carboxamide ribotide isomerase</fullName>
    </alternativeName>
</protein>
<reference key="1">
    <citation type="submission" date="2007-02" db="EMBL/GenBank/DDBJ databases">
        <title>Complete sequence of chromosome of Shewanella baltica OS155.</title>
        <authorList>
            <consortium name="US DOE Joint Genome Institute"/>
            <person name="Copeland A."/>
            <person name="Lucas S."/>
            <person name="Lapidus A."/>
            <person name="Barry K."/>
            <person name="Detter J.C."/>
            <person name="Glavina del Rio T."/>
            <person name="Hammon N."/>
            <person name="Israni S."/>
            <person name="Dalin E."/>
            <person name="Tice H."/>
            <person name="Pitluck S."/>
            <person name="Sims D.R."/>
            <person name="Brettin T."/>
            <person name="Bruce D."/>
            <person name="Han C."/>
            <person name="Tapia R."/>
            <person name="Brainard J."/>
            <person name="Schmutz J."/>
            <person name="Larimer F."/>
            <person name="Land M."/>
            <person name="Hauser L."/>
            <person name="Kyrpides N."/>
            <person name="Mikhailova N."/>
            <person name="Brettar I."/>
            <person name="Klappenbach J."/>
            <person name="Konstantinidis K."/>
            <person name="Rodrigues J."/>
            <person name="Tiedje J."/>
            <person name="Richardson P."/>
        </authorList>
    </citation>
    <scope>NUCLEOTIDE SEQUENCE [LARGE SCALE GENOMIC DNA]</scope>
    <source>
        <strain>OS155 / ATCC BAA-1091</strain>
    </source>
</reference>
<name>HIS4_SHEB5</name>
<sequence length="245" mass="26031">MIIPAIDLIDGNVVRLYQGDYGQQTTFDLSPLAQLQSYEAQGAKWLHIVDLTGAKDPGKRQTLLISQLVAGLNANIQVGGGIRTEEQVTELLDIGVKRVVIGSLAVKEPELVKQWFIKYGSEAICLALDVNINQSGEKIVAVSGWQSGGGKSLESLVETFSAVGLKHALVTDISRDGTLTGANTALYQEIAASYPDIAWQASGGIATLEDVAAVRDSGAAGIIIGKALLINQFNVVEAIQCWPND</sequence>
<gene>
    <name evidence="1" type="primary">hisA</name>
    <name type="ordered locus">Sbal_2430</name>
</gene>
<feature type="chain" id="PRO_1000063231" description="1-(5-phosphoribosyl)-5-[(5-phosphoribosylamino)methylideneamino] imidazole-4-carboxamide isomerase">
    <location>
        <begin position="1"/>
        <end position="245"/>
    </location>
</feature>
<feature type="active site" description="Proton acceptor" evidence="1">
    <location>
        <position position="7"/>
    </location>
</feature>
<feature type="active site" description="Proton donor" evidence="1">
    <location>
        <position position="129"/>
    </location>
</feature>
<accession>A3D5B0</accession>
<keyword id="KW-0028">Amino-acid biosynthesis</keyword>
<keyword id="KW-0963">Cytoplasm</keyword>
<keyword id="KW-0368">Histidine biosynthesis</keyword>
<keyword id="KW-0413">Isomerase</keyword>
<keyword id="KW-1185">Reference proteome</keyword>